<feature type="chain" id="PRO_1000071290" description="Translation initiation factor IF-2">
    <location>
        <begin position="1"/>
        <end position="870"/>
    </location>
</feature>
<feature type="domain" description="tr-type G">
    <location>
        <begin position="371"/>
        <end position="540"/>
    </location>
</feature>
<feature type="region of interest" description="Disordered" evidence="3">
    <location>
        <begin position="49"/>
        <end position="284"/>
    </location>
</feature>
<feature type="region of interest" description="G1" evidence="1">
    <location>
        <begin position="380"/>
        <end position="387"/>
    </location>
</feature>
<feature type="region of interest" description="G2" evidence="1">
    <location>
        <begin position="405"/>
        <end position="409"/>
    </location>
</feature>
<feature type="region of interest" description="G3" evidence="1">
    <location>
        <begin position="426"/>
        <end position="429"/>
    </location>
</feature>
<feature type="region of interest" description="G4" evidence="1">
    <location>
        <begin position="480"/>
        <end position="483"/>
    </location>
</feature>
<feature type="region of interest" description="G5" evidence="1">
    <location>
        <begin position="516"/>
        <end position="518"/>
    </location>
</feature>
<feature type="compositionally biased region" description="Basic and acidic residues" evidence="3">
    <location>
        <begin position="70"/>
        <end position="81"/>
    </location>
</feature>
<feature type="compositionally biased region" description="Basic and acidic residues" evidence="3">
    <location>
        <begin position="94"/>
        <end position="109"/>
    </location>
</feature>
<feature type="compositionally biased region" description="Low complexity" evidence="3">
    <location>
        <begin position="116"/>
        <end position="127"/>
    </location>
</feature>
<feature type="compositionally biased region" description="Basic and acidic residues" evidence="3">
    <location>
        <begin position="144"/>
        <end position="159"/>
    </location>
</feature>
<feature type="compositionally biased region" description="Basic and acidic residues" evidence="3">
    <location>
        <begin position="168"/>
        <end position="183"/>
    </location>
</feature>
<feature type="compositionally biased region" description="Basic residues" evidence="3">
    <location>
        <begin position="254"/>
        <end position="279"/>
    </location>
</feature>
<feature type="binding site" evidence="2">
    <location>
        <begin position="380"/>
        <end position="387"/>
    </location>
    <ligand>
        <name>GTP</name>
        <dbReference type="ChEBI" id="CHEBI:37565"/>
    </ligand>
</feature>
<feature type="binding site" evidence="2">
    <location>
        <begin position="426"/>
        <end position="430"/>
    </location>
    <ligand>
        <name>GTP</name>
        <dbReference type="ChEBI" id="CHEBI:37565"/>
    </ligand>
</feature>
<feature type="binding site" evidence="2">
    <location>
        <begin position="480"/>
        <end position="483"/>
    </location>
    <ligand>
        <name>GTP</name>
        <dbReference type="ChEBI" id="CHEBI:37565"/>
    </ligand>
</feature>
<gene>
    <name evidence="2" type="primary">infB</name>
    <name type="ordered locus">lhv_1342</name>
</gene>
<proteinExistence type="inferred from homology"/>
<keyword id="KW-0963">Cytoplasm</keyword>
<keyword id="KW-0342">GTP-binding</keyword>
<keyword id="KW-0396">Initiation factor</keyword>
<keyword id="KW-0547">Nucleotide-binding</keyword>
<keyword id="KW-0648">Protein biosynthesis</keyword>
<accession>A8YVQ7</accession>
<dbReference type="EMBL" id="CP000517">
    <property type="protein sequence ID" value="ABX27344.1"/>
    <property type="molecule type" value="Genomic_DNA"/>
</dbReference>
<dbReference type="RefSeq" id="WP_012212000.1">
    <property type="nucleotide sequence ID" value="NC_010080.1"/>
</dbReference>
<dbReference type="SMR" id="A8YVQ7"/>
<dbReference type="KEGG" id="lhe:lhv_1342"/>
<dbReference type="eggNOG" id="COG0532">
    <property type="taxonomic scope" value="Bacteria"/>
</dbReference>
<dbReference type="HOGENOM" id="CLU_006301_5_0_9"/>
<dbReference type="Proteomes" id="UP000000790">
    <property type="component" value="Chromosome"/>
</dbReference>
<dbReference type="GO" id="GO:0005829">
    <property type="term" value="C:cytosol"/>
    <property type="evidence" value="ECO:0007669"/>
    <property type="project" value="TreeGrafter"/>
</dbReference>
<dbReference type="GO" id="GO:0005525">
    <property type="term" value="F:GTP binding"/>
    <property type="evidence" value="ECO:0007669"/>
    <property type="project" value="UniProtKB-KW"/>
</dbReference>
<dbReference type="GO" id="GO:0003924">
    <property type="term" value="F:GTPase activity"/>
    <property type="evidence" value="ECO:0007669"/>
    <property type="project" value="UniProtKB-UniRule"/>
</dbReference>
<dbReference type="GO" id="GO:0003743">
    <property type="term" value="F:translation initiation factor activity"/>
    <property type="evidence" value="ECO:0007669"/>
    <property type="project" value="UniProtKB-UniRule"/>
</dbReference>
<dbReference type="CDD" id="cd01887">
    <property type="entry name" value="IF2_eIF5B"/>
    <property type="match status" value="1"/>
</dbReference>
<dbReference type="CDD" id="cd03702">
    <property type="entry name" value="IF2_mtIF2_II"/>
    <property type="match status" value="1"/>
</dbReference>
<dbReference type="CDD" id="cd03692">
    <property type="entry name" value="mtIF2_IVc"/>
    <property type="match status" value="1"/>
</dbReference>
<dbReference type="FunFam" id="2.40.30.10:FF:000007">
    <property type="entry name" value="Translation initiation factor IF-2"/>
    <property type="match status" value="1"/>
</dbReference>
<dbReference type="FunFam" id="2.40.30.10:FF:000008">
    <property type="entry name" value="Translation initiation factor IF-2"/>
    <property type="match status" value="1"/>
</dbReference>
<dbReference type="FunFam" id="3.40.50.10050:FF:000001">
    <property type="entry name" value="Translation initiation factor IF-2"/>
    <property type="match status" value="1"/>
</dbReference>
<dbReference type="FunFam" id="3.40.50.300:FF:000019">
    <property type="entry name" value="Translation initiation factor IF-2"/>
    <property type="match status" value="1"/>
</dbReference>
<dbReference type="Gene3D" id="1.10.10.2480">
    <property type="match status" value="1"/>
</dbReference>
<dbReference type="Gene3D" id="3.40.50.300">
    <property type="entry name" value="P-loop containing nucleotide triphosphate hydrolases"/>
    <property type="match status" value="1"/>
</dbReference>
<dbReference type="Gene3D" id="2.40.30.10">
    <property type="entry name" value="Translation factors"/>
    <property type="match status" value="2"/>
</dbReference>
<dbReference type="Gene3D" id="3.40.50.10050">
    <property type="entry name" value="Translation initiation factor IF- 2, domain 3"/>
    <property type="match status" value="1"/>
</dbReference>
<dbReference type="HAMAP" id="MF_00100_B">
    <property type="entry name" value="IF_2_B"/>
    <property type="match status" value="1"/>
</dbReference>
<dbReference type="InterPro" id="IPR053905">
    <property type="entry name" value="EF-G-like_DII"/>
</dbReference>
<dbReference type="InterPro" id="IPR044145">
    <property type="entry name" value="IF2_II"/>
</dbReference>
<dbReference type="InterPro" id="IPR006847">
    <property type="entry name" value="IF2_N"/>
</dbReference>
<dbReference type="InterPro" id="IPR027417">
    <property type="entry name" value="P-loop_NTPase"/>
</dbReference>
<dbReference type="InterPro" id="IPR005225">
    <property type="entry name" value="Small_GTP-bd"/>
</dbReference>
<dbReference type="InterPro" id="IPR000795">
    <property type="entry name" value="T_Tr_GTP-bd_dom"/>
</dbReference>
<dbReference type="InterPro" id="IPR000178">
    <property type="entry name" value="TF_IF2_bacterial-like"/>
</dbReference>
<dbReference type="InterPro" id="IPR015760">
    <property type="entry name" value="TIF_IF2"/>
</dbReference>
<dbReference type="InterPro" id="IPR023115">
    <property type="entry name" value="TIF_IF2_dom3"/>
</dbReference>
<dbReference type="InterPro" id="IPR036925">
    <property type="entry name" value="TIF_IF2_dom3_sf"/>
</dbReference>
<dbReference type="InterPro" id="IPR009000">
    <property type="entry name" value="Transl_B-barrel_sf"/>
</dbReference>
<dbReference type="NCBIfam" id="TIGR00487">
    <property type="entry name" value="IF-2"/>
    <property type="match status" value="1"/>
</dbReference>
<dbReference type="NCBIfam" id="TIGR00231">
    <property type="entry name" value="small_GTP"/>
    <property type="match status" value="1"/>
</dbReference>
<dbReference type="PANTHER" id="PTHR43381:SF5">
    <property type="entry name" value="TR-TYPE G DOMAIN-CONTAINING PROTEIN"/>
    <property type="match status" value="1"/>
</dbReference>
<dbReference type="PANTHER" id="PTHR43381">
    <property type="entry name" value="TRANSLATION INITIATION FACTOR IF-2-RELATED"/>
    <property type="match status" value="1"/>
</dbReference>
<dbReference type="Pfam" id="PF22042">
    <property type="entry name" value="EF-G_D2"/>
    <property type="match status" value="1"/>
</dbReference>
<dbReference type="Pfam" id="PF00009">
    <property type="entry name" value="GTP_EFTU"/>
    <property type="match status" value="1"/>
</dbReference>
<dbReference type="Pfam" id="PF11987">
    <property type="entry name" value="IF-2"/>
    <property type="match status" value="1"/>
</dbReference>
<dbReference type="Pfam" id="PF04760">
    <property type="entry name" value="IF2_N"/>
    <property type="match status" value="2"/>
</dbReference>
<dbReference type="SUPFAM" id="SSF52156">
    <property type="entry name" value="Initiation factor IF2/eIF5b, domain 3"/>
    <property type="match status" value="1"/>
</dbReference>
<dbReference type="SUPFAM" id="SSF52540">
    <property type="entry name" value="P-loop containing nucleoside triphosphate hydrolases"/>
    <property type="match status" value="1"/>
</dbReference>
<dbReference type="SUPFAM" id="SSF50447">
    <property type="entry name" value="Translation proteins"/>
    <property type="match status" value="2"/>
</dbReference>
<dbReference type="PROSITE" id="PS51722">
    <property type="entry name" value="G_TR_2"/>
    <property type="match status" value="1"/>
</dbReference>
<dbReference type="PROSITE" id="PS01176">
    <property type="entry name" value="IF2"/>
    <property type="match status" value="1"/>
</dbReference>
<organism>
    <name type="scientific">Lactobacillus helveticus (strain DPC 4571)</name>
    <dbReference type="NCBI Taxonomy" id="405566"/>
    <lineage>
        <taxon>Bacteria</taxon>
        <taxon>Bacillati</taxon>
        <taxon>Bacillota</taxon>
        <taxon>Bacilli</taxon>
        <taxon>Lactobacillales</taxon>
        <taxon>Lactobacillaceae</taxon>
        <taxon>Lactobacillus</taxon>
    </lineage>
</organism>
<comment type="function">
    <text evidence="2">One of the essential components for the initiation of protein synthesis. Protects formylmethionyl-tRNA from spontaneous hydrolysis and promotes its binding to the 30S ribosomal subunits. Also involved in the hydrolysis of GTP during the formation of the 70S ribosomal complex.</text>
</comment>
<comment type="subcellular location">
    <subcellularLocation>
        <location evidence="2">Cytoplasm</location>
    </subcellularLocation>
</comment>
<comment type="similarity">
    <text evidence="2">Belongs to the TRAFAC class translation factor GTPase superfamily. Classic translation factor GTPase family. IF-2 subfamily.</text>
</comment>
<sequence length="870" mass="97279">MAKKRIYEVAKEVGVDNKVVVQKAKELGFDVKNHMSSIDDAQVAKLKGSFQNSAPAEKNNKIKISVSSIRKNEKKQEDNAGSKKPRRRNNKRLQNNDRNHKNRNDRDHSANSGSGKPKAAALLQQFKQKQRAEEGQLNRQAQKAKKEYHEQLKYPKKEQPVNNKKKTNKESNNKKSEEVEKKVIGPKILKPSPARLKKNQPSTNEKPAVKVSIPEPPKEEKRNNGRGKNMGKPGHKGKNQFFNNHSEQSDRSERKRRKNKNKKRKQEQKPKKQITKRKERPLPETLVYEKGMNAQDIGKLIHREPAEIVKKLFMLGVMTNQNRSLDKDTIELLAAEYGINAKQKVHEDISDIDTLYNKRMEASKKSKNQVKRPPVVTIMGHVDHGKTTLLDRLRHTHVSAHEAGGITQKIGAYQVRLDDRLITFLDTPGHAAFSNMRARGAEITDIVVLVVAADDGVMPQTVEAIDHAKSANVPIIVAINKMDKPGANPQHVTEELMKYNLIPEDYGGDTIFVNISARTGQNVDDLLQMILLQADMMELKANPTEMAIGTVIEARLSRGRGPVADVLIQQGTLNIGDPIVVGDTFGRVRTMTNDRGRQVKKATPSEPVEITGLNDVPESADKLVEFKDEKTARSVGEARAQQALQKSRENVQHVTLDNLFDTMKKENMKEVDIVLKADVQGSVEALQQSLEKIEVEGVRVNIIHSGVGAINESDVTLAGASNAFIIGFNVRPTATAKSQAETEGVDIRLYSIIYKAIDDVTAAMKGMLEPTYEEKVIGNLTVRETWKVSKVGTIAGSFVDKGLVKSDAKIRIIRDGIVKYDGEIASLKRFKDDVKEVKQGNDCGLTIKDYNDIKVGDEFEVYEMQQVEPK</sequence>
<reference key="1">
    <citation type="journal article" date="2008" name="J. Bacteriol.">
        <title>Genome sequence of Lactobacillus helveticus: an organism distinguished by selective gene loss and IS element expansion.</title>
        <authorList>
            <person name="Callanan M."/>
            <person name="Kaleta P."/>
            <person name="O'Callaghan J."/>
            <person name="O'Sullivan O."/>
            <person name="Jordan K."/>
            <person name="McAuliffe O."/>
            <person name="Sangrador-Vegas A."/>
            <person name="Slattery L."/>
            <person name="Fitzgerald G.F."/>
            <person name="Beresford T."/>
            <person name="Ross R.P."/>
        </authorList>
    </citation>
    <scope>NUCLEOTIDE SEQUENCE [LARGE SCALE GENOMIC DNA]</scope>
    <source>
        <strain>DPC 4571</strain>
    </source>
</reference>
<protein>
    <recommendedName>
        <fullName evidence="2">Translation initiation factor IF-2</fullName>
    </recommendedName>
</protein>
<evidence type="ECO:0000250" key="1"/>
<evidence type="ECO:0000255" key="2">
    <source>
        <dbReference type="HAMAP-Rule" id="MF_00100"/>
    </source>
</evidence>
<evidence type="ECO:0000256" key="3">
    <source>
        <dbReference type="SAM" id="MobiDB-lite"/>
    </source>
</evidence>
<name>IF2_LACH4</name>